<keyword id="KW-0131">Cell cycle</keyword>
<keyword id="KW-0132">Cell division</keyword>
<keyword id="KW-0195">Cyclin</keyword>
<keyword id="KW-0498">Mitosis</keyword>
<protein>
    <recommendedName>
        <fullName>G2/mitotic-specific cyclin-1</fullName>
    </recommendedName>
</protein>
<organism>
    <name type="scientific">Antirrhinum majus</name>
    <name type="common">Garden snapdragon</name>
    <dbReference type="NCBI Taxonomy" id="4151"/>
    <lineage>
        <taxon>Eukaryota</taxon>
        <taxon>Viridiplantae</taxon>
        <taxon>Streptophyta</taxon>
        <taxon>Embryophyta</taxon>
        <taxon>Tracheophyta</taxon>
        <taxon>Spermatophyta</taxon>
        <taxon>Magnoliopsida</taxon>
        <taxon>eudicotyledons</taxon>
        <taxon>Gunneridae</taxon>
        <taxon>Pentapetalae</taxon>
        <taxon>asterids</taxon>
        <taxon>lamiids</taxon>
        <taxon>Lamiales</taxon>
        <taxon>Plantaginaceae</taxon>
        <taxon>Antirrhineae</taxon>
        <taxon>Antirrhinum</taxon>
    </lineage>
</organism>
<evidence type="ECO:0000256" key="1">
    <source>
        <dbReference type="SAM" id="MobiDB-lite"/>
    </source>
</evidence>
<evidence type="ECO:0000305" key="2"/>
<proteinExistence type="evidence at transcript level"/>
<name>CCN1_ANTMA</name>
<dbReference type="EMBL" id="X76122">
    <property type="protein sequence ID" value="CAA53728.1"/>
    <property type="molecule type" value="mRNA"/>
</dbReference>
<dbReference type="PIR" id="S41709">
    <property type="entry name" value="S41709"/>
</dbReference>
<dbReference type="SMR" id="P34800"/>
<dbReference type="GO" id="GO:0016538">
    <property type="term" value="F:cyclin-dependent protein serine/threonine kinase regulator activity"/>
    <property type="evidence" value="ECO:0007669"/>
    <property type="project" value="InterPro"/>
</dbReference>
<dbReference type="GO" id="GO:0051301">
    <property type="term" value="P:cell division"/>
    <property type="evidence" value="ECO:0007669"/>
    <property type="project" value="UniProtKB-KW"/>
</dbReference>
<dbReference type="GO" id="GO:0044772">
    <property type="term" value="P:mitotic cell cycle phase transition"/>
    <property type="evidence" value="ECO:0007669"/>
    <property type="project" value="InterPro"/>
</dbReference>
<dbReference type="CDD" id="cd20567">
    <property type="entry name" value="CYCLIN_AtCycB-like_rpt1"/>
    <property type="match status" value="1"/>
</dbReference>
<dbReference type="CDD" id="cd20511">
    <property type="entry name" value="CYCLIN_AtCycB-like_rpt2"/>
    <property type="match status" value="1"/>
</dbReference>
<dbReference type="FunFam" id="1.10.472.10:FF:000032">
    <property type="entry name" value="G2/mitotic-specific cyclin-1"/>
    <property type="match status" value="1"/>
</dbReference>
<dbReference type="Gene3D" id="1.10.472.10">
    <property type="entry name" value="Cyclin-like"/>
    <property type="match status" value="2"/>
</dbReference>
<dbReference type="InterPro" id="IPR039361">
    <property type="entry name" value="Cyclin"/>
</dbReference>
<dbReference type="InterPro" id="IPR013763">
    <property type="entry name" value="Cyclin-like_dom"/>
</dbReference>
<dbReference type="InterPro" id="IPR036915">
    <property type="entry name" value="Cyclin-like_sf"/>
</dbReference>
<dbReference type="InterPro" id="IPR046965">
    <property type="entry name" value="Cyclin_A/B-like"/>
</dbReference>
<dbReference type="InterPro" id="IPR004367">
    <property type="entry name" value="Cyclin_C-dom"/>
</dbReference>
<dbReference type="InterPro" id="IPR006671">
    <property type="entry name" value="Cyclin_N"/>
</dbReference>
<dbReference type="InterPro" id="IPR048258">
    <property type="entry name" value="Cyclins_cyclin-box"/>
</dbReference>
<dbReference type="PANTHER" id="PTHR10177">
    <property type="entry name" value="CYCLINS"/>
    <property type="match status" value="1"/>
</dbReference>
<dbReference type="Pfam" id="PF02984">
    <property type="entry name" value="Cyclin_C"/>
    <property type="match status" value="1"/>
</dbReference>
<dbReference type="Pfam" id="PF00134">
    <property type="entry name" value="Cyclin_N"/>
    <property type="match status" value="1"/>
</dbReference>
<dbReference type="PIRSF" id="PIRSF001771">
    <property type="entry name" value="Cyclin_A_B_D_E"/>
    <property type="match status" value="1"/>
</dbReference>
<dbReference type="SMART" id="SM00385">
    <property type="entry name" value="CYCLIN"/>
    <property type="match status" value="2"/>
</dbReference>
<dbReference type="SMART" id="SM01332">
    <property type="entry name" value="Cyclin_C"/>
    <property type="match status" value="1"/>
</dbReference>
<dbReference type="SUPFAM" id="SSF47954">
    <property type="entry name" value="Cyclin-like"/>
    <property type="match status" value="2"/>
</dbReference>
<dbReference type="PROSITE" id="PS00292">
    <property type="entry name" value="CYCLINS"/>
    <property type="match status" value="1"/>
</dbReference>
<accession>P34800</accession>
<sequence length="473" mass="52704">MGSRNIVQQQNRAEAAVPGAMKQKNIAGEKKNRRALGDIGNLVTVRGVDGKAKAIPQVSRPVTRSFCAQLLANAQTAAADNNKINAKGAIVVDGVLPDRRVAAARVPAQKKAAVVKPRPEEIIVISPDSVAEKKEKPIEKEKAAEKSAKKKAPTLTSTLTARSKAASGVKTKTKEQIVDIDAADVNNDLAVVEYVEDMYKFYKSVENESRPHDYMGSQPEINEKMRAILIDWLVQVHHKFELSPETLYLTINIVDRYLASETTIRRELQLVGIGAMLIASKYEEIWAPEVHELVCISDNTYSDKQILVMEKKILGALEWYLTVPTPYVFLVRFIKASMTDSDVENMVYFLAELGMMNYATLIYCPSMIAAASVYAARCTLNKAPFWNETLQLHTGFSEPQLMDCAKLLVAFPKMAGDQKLKSIYRKYSNLERGAVALLSPAKSVFVFLIELLMNAIEKIQCSLFFTSEIWCRF</sequence>
<reference key="1">
    <citation type="journal article" date="1994" name="EMBO J.">
        <title>Patterns of cell division revealed by transcriptional regulation of genes during the cell cycle in plants.</title>
        <authorList>
            <person name="Fobert P.R."/>
            <person name="Coen E.S."/>
            <person name="Murphy G.J.P."/>
            <person name="Doonan J.H."/>
        </authorList>
    </citation>
    <scope>NUCLEOTIDE SEQUENCE [MRNA]</scope>
</reference>
<comment type="function">
    <text>Essential for the control of the cell cycle at the G2/M (mitosis) transition. G2/M cyclins accumulate steadily during G2 and are abruptly destroyed at mitosis.</text>
</comment>
<comment type="subunit">
    <text>Interacts with the CDC2 and CDK2 protein kinases to form a serine/threonine kinase holoenzyme complex. The cyclin subunit imparts substrate specificity to the complex.</text>
</comment>
<comment type="developmental stage">
    <text>Accumulates steadily during G2 and is abruptly destroyed at mitosis.</text>
</comment>
<comment type="similarity">
    <text evidence="2">Belongs to the cyclin family. Cyclin AB subfamily.</text>
</comment>
<feature type="chain" id="PRO_0000080389" description="G2/mitotic-specific cyclin-1">
    <location>
        <begin position="1"/>
        <end position="473"/>
    </location>
</feature>
<feature type="region of interest" description="Disordered" evidence="1">
    <location>
        <begin position="1"/>
        <end position="23"/>
    </location>
</feature>
<feature type="region of interest" description="Disordered" evidence="1">
    <location>
        <begin position="134"/>
        <end position="155"/>
    </location>
</feature>
<feature type="compositionally biased region" description="Polar residues" evidence="1">
    <location>
        <begin position="1"/>
        <end position="12"/>
    </location>
</feature>
<feature type="compositionally biased region" description="Basic and acidic residues" evidence="1">
    <location>
        <begin position="134"/>
        <end position="147"/>
    </location>
</feature>